<feature type="chain" id="PRO_0000185301" description="Peptidase T">
    <location>
        <begin position="1"/>
        <end position="413"/>
    </location>
</feature>
<feature type="active site" evidence="1">
    <location>
        <position position="83"/>
    </location>
</feature>
<feature type="active site" description="Proton acceptor" evidence="1">
    <location>
        <position position="178"/>
    </location>
</feature>
<feature type="binding site" evidence="1">
    <location>
        <position position="81"/>
    </location>
    <ligand>
        <name>Zn(2+)</name>
        <dbReference type="ChEBI" id="CHEBI:29105"/>
        <label>1</label>
    </ligand>
</feature>
<feature type="binding site" evidence="1">
    <location>
        <position position="143"/>
    </location>
    <ligand>
        <name>Zn(2+)</name>
        <dbReference type="ChEBI" id="CHEBI:29105"/>
        <label>1</label>
    </ligand>
</feature>
<feature type="binding site" evidence="1">
    <location>
        <position position="143"/>
    </location>
    <ligand>
        <name>Zn(2+)</name>
        <dbReference type="ChEBI" id="CHEBI:29105"/>
        <label>2</label>
    </ligand>
</feature>
<feature type="binding site" evidence="1">
    <location>
        <position position="179"/>
    </location>
    <ligand>
        <name>Zn(2+)</name>
        <dbReference type="ChEBI" id="CHEBI:29105"/>
        <label>2</label>
    </ligand>
</feature>
<feature type="binding site" evidence="1">
    <location>
        <position position="201"/>
    </location>
    <ligand>
        <name>Zn(2+)</name>
        <dbReference type="ChEBI" id="CHEBI:29105"/>
        <label>1</label>
    </ligand>
</feature>
<feature type="binding site" evidence="1">
    <location>
        <position position="383"/>
    </location>
    <ligand>
        <name>Zn(2+)</name>
        <dbReference type="ChEBI" id="CHEBI:29105"/>
        <label>2</label>
    </ligand>
</feature>
<feature type="sequence variant" description="In strain: ATCC 19257.">
    <original>G</original>
    <variation>R</variation>
    <location>
        <position position="48"/>
    </location>
</feature>
<feature type="sequence variant" description="In strain: ATCC 19257.">
    <original>P</original>
    <variation>S</variation>
    <location>
        <position position="94"/>
    </location>
</feature>
<feature type="sequence variant" description="In strain: NIRD HC-1.">
    <original>D</original>
    <variation>E</variation>
    <location>
        <position position="191"/>
    </location>
</feature>
<feature type="sequence variant" description="In strain: ATCC 19257 and NIRD HC-1.">
    <original>L</original>
    <variation>V</variation>
    <location>
        <position position="318"/>
    </location>
</feature>
<name>PEPT_LACLC</name>
<sequence length="413" mass="45960">MKYEKLLPRFLEYVKVNTRSDENSTTTPSTQALVEFAHKMGEDMKALGLKDVHYLESNGYVIGTIPANTDKKVRKIGLLAHLDTADFNAEGVNPQILENYDGESVIQLGDTEFTLDPKDFPNLKNYKGQTLVHTDGTTLLGSDDKSGVAEIMTLADYLLNINPDFEHGEIRVGFGPDEEIGVGADKFDVADFDVDFAYTVDGGPLGELQYETFSAAGAVIEFQGKNVHPGTAKNMMVNALQLAIDYHNALPEFDRPEKTEGREGFFHLLKLDGTPEEARAQYIIRDHEEGKFNERKALMQEIADKMNAELGQNRVKPLIKDQYYNMAQIIEKDMSIIDIAKKAMENLDIAPIIEPIRGGTDGSKISFMGLPTPNLFAGGENMHGRFEFVSVQTMEKAVDTLLEIIRLNNEVAK</sequence>
<organism>
    <name type="scientific">Lactococcus lactis subsp. cremoris</name>
    <name type="common">Streptococcus cremoris</name>
    <dbReference type="NCBI Taxonomy" id="1359"/>
    <lineage>
        <taxon>Bacteria</taxon>
        <taxon>Bacillati</taxon>
        <taxon>Bacillota</taxon>
        <taxon>Bacilli</taxon>
        <taxon>Lactobacillales</taxon>
        <taxon>Streptococcaceae</taxon>
        <taxon>Lactococcus</taxon>
    </lineage>
</organism>
<proteinExistence type="evidence at protein level"/>
<reference key="1">
    <citation type="journal article" date="2004" name="Syst. Appl. Microbiol.">
        <title>Phylogenetic analysis of Lactococcus lactis subspecies based on decoding the sequence of the pepT tripeptidase gene, the pepV dipeptidase gene and 16S rRNA.</title>
        <authorList>
            <person name="Mori S."/>
            <person name="Mori K."/>
            <person name="Suzuki I."/>
            <person name="Kasumi T."/>
        </authorList>
    </citation>
    <scope>NUCLEOTIDE SEQUENCE [GENOMIC DNA]</scope>
    <source>
        <strain>ATCC 19257 / DSM 20069 / BCRC 12586 / JCM 16167 / LMG 6897 / NBRC 100676 / NCDO 607 / NCIMB 8662 / HP</strain>
        <strain>NIAI H-61</strain>
        <strain>NIRD HC-1</strain>
        <strain>NIRD Ho-6</strain>
    </source>
</reference>
<reference key="2">
    <citation type="journal article" date="1994" name="J. Bacteriol.">
        <title>Tripeptidase gene (pepT) of Lactococcus lactis: molecular cloning and nucleotide sequencing of pepT and construction of a chromosomal deletion mutant.</title>
        <authorList>
            <person name="Mierau I."/>
            <person name="Haandrikman A.J."/>
            <person name="Velterop O."/>
            <person name="Tan P.S.T."/>
            <person name="Leenhouts K.L."/>
            <person name="Konings W.N."/>
            <person name="Venema G."/>
            <person name="Kok J."/>
        </authorList>
    </citation>
    <scope>PROTEIN SEQUENCE OF 1-20</scope>
    <source>
        <strain>Wg2</strain>
    </source>
</reference>
<reference key="3">
    <citation type="journal article" date="1990" name="Appl. Environ. Microbiol.">
        <title>Purification and characterization of a tripeptidase from Lactococcus lactis subsp. cremoris Wg2.</title>
        <authorList>
            <person name="Bosman B.W."/>
            <person name="Tan P.S.T."/>
            <person name="Konings W.N."/>
        </authorList>
    </citation>
    <scope>FUNCTION</scope>
    <scope>CHARACTERIZATION</scope>
    <scope>SUBSTRATE SPECIFICITY</scope>
    <scope>COFACTOR</scope>
    <scope>SUBUNIT</scope>
    <scope>ACTIVITY REGULATION</scope>
    <scope>BIOPHYSICOCHEMICAL PROPERTIES</scope>
    <source>
        <strain>Wg2</strain>
    </source>
</reference>
<keyword id="KW-0031">Aminopeptidase</keyword>
<keyword id="KW-0963">Cytoplasm</keyword>
<keyword id="KW-0903">Direct protein sequencing</keyword>
<keyword id="KW-0378">Hydrolase</keyword>
<keyword id="KW-0479">Metal-binding</keyword>
<keyword id="KW-0482">Metalloprotease</keyword>
<keyword id="KW-0645">Protease</keyword>
<keyword id="KW-0862">Zinc</keyword>
<gene>
    <name type="primary">pepT</name>
</gene>
<comment type="function">
    <text evidence="2">Cleaves the N-terminal amino acid of tripeptides. Has a broad specificity for tripeptides with no clear preference for a particular tripeptide. Tripeptides with proline in the second position are an exception and are not hydrolyzed. Does not hydrolyze dipeptides, tetrapeptides, or oligopeptides.</text>
</comment>
<comment type="catalytic activity">
    <reaction>
        <text>Release of the N-terminal residue from a tripeptide.</text>
        <dbReference type="EC" id="3.4.11.4"/>
    </reaction>
</comment>
<comment type="cofactor">
    <cofactor evidence="4">
        <name>Zn(2+)</name>
        <dbReference type="ChEBI" id="CHEBI:29105"/>
    </cofactor>
    <text evidence="4">Binds 2 Zn(2+) ions per subunit.</text>
</comment>
<comment type="activity regulation">
    <text evidence="2">Inhibited by EDTA, by the reducing agents dithiothreitol and 13-mercaptoethanol, and by the divalent cation Cu(2+).</text>
</comment>
<comment type="biophysicochemical properties">
    <kinetics>
        <KM evidence="2">0.15 mM for tripeptide Leu-Leu-Leu</KM>
        <Vmax evidence="2">151.0 umol/min/mg enzyme with Leu-Leu-Leu as substrate</Vmax>
    </kinetics>
    <phDependence>
        <text evidence="2">Optimum pH is 7.5.</text>
    </phDependence>
    <temperatureDependence>
        <text evidence="2">Optimum temperature is 55 degrees Celsius.</text>
    </temperatureDependence>
</comment>
<comment type="subunit">
    <text evidence="2">Homodimer.</text>
</comment>
<comment type="subcellular location">
    <subcellularLocation>
        <location evidence="1">Cytoplasm</location>
    </subcellularLocation>
</comment>
<comment type="similarity">
    <text evidence="3">Belongs to the peptidase M20B family.</text>
</comment>
<evidence type="ECO:0000250" key="1"/>
<evidence type="ECO:0000269" key="2">
    <source>
    </source>
</evidence>
<evidence type="ECO:0000305" key="3"/>
<evidence type="ECO:0000305" key="4">
    <source>
    </source>
</evidence>
<dbReference type="EC" id="3.4.11.4"/>
<dbReference type="EMBL" id="AB100761">
    <property type="protein sequence ID" value="BAC66661.1"/>
    <property type="molecule type" value="Genomic_DNA"/>
</dbReference>
<dbReference type="EMBL" id="AB100762">
    <property type="protein sequence ID" value="BAC66662.1"/>
    <property type="molecule type" value="Genomic_DNA"/>
</dbReference>
<dbReference type="EMBL" id="AB100763">
    <property type="protein sequence ID" value="BAC66663.1"/>
    <property type="molecule type" value="Genomic_DNA"/>
</dbReference>
<dbReference type="EMBL" id="AB100772">
    <property type="protein sequence ID" value="BAC66672.1"/>
    <property type="molecule type" value="Genomic_DNA"/>
</dbReference>
<dbReference type="RefSeq" id="WP_396426134.1">
    <property type="nucleotide sequence ID" value="NZ_CP126569.1"/>
</dbReference>
<dbReference type="SMR" id="P0C2T7"/>
<dbReference type="SABIO-RK" id="P0C2T7"/>
<dbReference type="GO" id="GO:0005829">
    <property type="term" value="C:cytosol"/>
    <property type="evidence" value="ECO:0007669"/>
    <property type="project" value="TreeGrafter"/>
</dbReference>
<dbReference type="GO" id="GO:0008237">
    <property type="term" value="F:metallopeptidase activity"/>
    <property type="evidence" value="ECO:0007669"/>
    <property type="project" value="UniProtKB-KW"/>
</dbReference>
<dbReference type="GO" id="GO:0045148">
    <property type="term" value="F:tripeptide aminopeptidase activity"/>
    <property type="evidence" value="ECO:0007669"/>
    <property type="project" value="UniProtKB-UniRule"/>
</dbReference>
<dbReference type="GO" id="GO:0008270">
    <property type="term" value="F:zinc ion binding"/>
    <property type="evidence" value="ECO:0007669"/>
    <property type="project" value="UniProtKB-UniRule"/>
</dbReference>
<dbReference type="GO" id="GO:0043171">
    <property type="term" value="P:peptide catabolic process"/>
    <property type="evidence" value="ECO:0007669"/>
    <property type="project" value="UniProtKB-UniRule"/>
</dbReference>
<dbReference type="GO" id="GO:0006508">
    <property type="term" value="P:proteolysis"/>
    <property type="evidence" value="ECO:0007669"/>
    <property type="project" value="UniProtKB-UniRule"/>
</dbReference>
<dbReference type="CDD" id="cd03892">
    <property type="entry name" value="M20_peptT"/>
    <property type="match status" value="1"/>
</dbReference>
<dbReference type="FunFam" id="3.30.70.360:FF:000002">
    <property type="entry name" value="Peptidase T"/>
    <property type="match status" value="1"/>
</dbReference>
<dbReference type="Gene3D" id="3.30.70.360">
    <property type="match status" value="1"/>
</dbReference>
<dbReference type="Gene3D" id="3.40.630.10">
    <property type="entry name" value="Zn peptidases"/>
    <property type="match status" value="1"/>
</dbReference>
<dbReference type="HAMAP" id="MF_00550">
    <property type="entry name" value="Aminopeptidase_M20"/>
    <property type="match status" value="1"/>
</dbReference>
<dbReference type="InterPro" id="IPR001261">
    <property type="entry name" value="ArgE/DapE_CS"/>
</dbReference>
<dbReference type="InterPro" id="IPR036264">
    <property type="entry name" value="Bact_exopeptidase_dim_dom"/>
</dbReference>
<dbReference type="InterPro" id="IPR002933">
    <property type="entry name" value="Peptidase_M20"/>
</dbReference>
<dbReference type="InterPro" id="IPR011650">
    <property type="entry name" value="Peptidase_M20_dimer"/>
</dbReference>
<dbReference type="InterPro" id="IPR010161">
    <property type="entry name" value="Peptidase_M20B"/>
</dbReference>
<dbReference type="NCBIfam" id="TIGR01882">
    <property type="entry name" value="peptidase-T"/>
    <property type="match status" value="1"/>
</dbReference>
<dbReference type="NCBIfam" id="NF003976">
    <property type="entry name" value="PRK05469.1"/>
    <property type="match status" value="1"/>
</dbReference>
<dbReference type="NCBIfam" id="NF009920">
    <property type="entry name" value="PRK13381.1"/>
    <property type="match status" value="1"/>
</dbReference>
<dbReference type="PANTHER" id="PTHR42994">
    <property type="entry name" value="PEPTIDASE T"/>
    <property type="match status" value="1"/>
</dbReference>
<dbReference type="PANTHER" id="PTHR42994:SF1">
    <property type="entry name" value="PEPTIDASE T"/>
    <property type="match status" value="1"/>
</dbReference>
<dbReference type="Pfam" id="PF07687">
    <property type="entry name" value="M20_dimer"/>
    <property type="match status" value="1"/>
</dbReference>
<dbReference type="Pfam" id="PF01546">
    <property type="entry name" value="Peptidase_M20"/>
    <property type="match status" value="1"/>
</dbReference>
<dbReference type="PIRSF" id="PIRSF037215">
    <property type="entry name" value="Peptidase_M20B"/>
    <property type="match status" value="1"/>
</dbReference>
<dbReference type="SUPFAM" id="SSF55031">
    <property type="entry name" value="Bacterial exopeptidase dimerisation domain"/>
    <property type="match status" value="1"/>
</dbReference>
<dbReference type="SUPFAM" id="SSF53187">
    <property type="entry name" value="Zn-dependent exopeptidases"/>
    <property type="match status" value="1"/>
</dbReference>
<dbReference type="PROSITE" id="PS00758">
    <property type="entry name" value="ARGE_DAPE_CPG2_1"/>
    <property type="match status" value="1"/>
</dbReference>
<dbReference type="PROSITE" id="PS00759">
    <property type="entry name" value="ARGE_DAPE_CPG2_2"/>
    <property type="match status" value="1"/>
</dbReference>
<protein>
    <recommendedName>
        <fullName>Peptidase T</fullName>
        <ecNumber>3.4.11.4</ecNumber>
    </recommendedName>
    <alternativeName>
        <fullName>Aminotripeptidase</fullName>
        <shortName>Tripeptidase</shortName>
    </alternativeName>
    <alternativeName>
        <fullName>Tripeptide aminopeptidase</fullName>
    </alternativeName>
</protein>
<accession>P0C2T7</accession>
<accession>P42020</accession>
<accession>Q83U12</accession>
<accession>Q84BV4</accession>
<accession>Q84BV5</accession>